<proteinExistence type="predicted"/>
<dbReference type="EMBL" id="U00096">
    <property type="protein sequence ID" value="AAC74847.2"/>
    <property type="molecule type" value="Genomic_DNA"/>
</dbReference>
<dbReference type="EMBL" id="AP009048">
    <property type="protein sequence ID" value="BAE76525.1"/>
    <property type="molecule type" value="Genomic_DNA"/>
</dbReference>
<dbReference type="PIR" id="A64938">
    <property type="entry name" value="A64938"/>
</dbReference>
<dbReference type="RefSeq" id="NP_416291.4">
    <property type="nucleotide sequence ID" value="NC_000913.3"/>
</dbReference>
<dbReference type="RefSeq" id="WP_001300415.1">
    <property type="nucleotide sequence ID" value="NZ_SSZK01000001.1"/>
</dbReference>
<dbReference type="BioGRID" id="4263119">
    <property type="interactions" value="10"/>
</dbReference>
<dbReference type="FunCoup" id="P76231">
    <property type="interactions" value="21"/>
</dbReference>
<dbReference type="IntAct" id="P76231">
    <property type="interactions" value="2"/>
</dbReference>
<dbReference type="STRING" id="511145.b1777"/>
<dbReference type="jPOST" id="P76231"/>
<dbReference type="PaxDb" id="511145-b1777"/>
<dbReference type="EnsemblBacteria" id="AAC74847">
    <property type="protein sequence ID" value="AAC74847"/>
    <property type="gene ID" value="b1777"/>
</dbReference>
<dbReference type="GeneID" id="947074"/>
<dbReference type="KEGG" id="ecj:JW1766"/>
<dbReference type="KEGG" id="eco:b1777"/>
<dbReference type="KEGG" id="ecoc:C3026_10140"/>
<dbReference type="PATRIC" id="fig|511145.12.peg.1850"/>
<dbReference type="EchoBASE" id="EB3262"/>
<dbReference type="eggNOG" id="COG3139">
    <property type="taxonomic scope" value="Bacteria"/>
</dbReference>
<dbReference type="HOGENOM" id="CLU_150108_0_1_6"/>
<dbReference type="InParanoid" id="P76231"/>
<dbReference type="OMA" id="HMTIGTD"/>
<dbReference type="OrthoDB" id="5616307at2"/>
<dbReference type="PhylomeDB" id="P76231"/>
<dbReference type="BioCyc" id="EcoCyc:G6964-MONOMER"/>
<dbReference type="PRO" id="PR:P76231"/>
<dbReference type="Proteomes" id="UP000000625">
    <property type="component" value="Chromosome"/>
</dbReference>
<dbReference type="InterPro" id="IPR009749">
    <property type="entry name" value="DUF1315"/>
</dbReference>
<dbReference type="Pfam" id="PF07023">
    <property type="entry name" value="DUF1315"/>
    <property type="match status" value="1"/>
</dbReference>
<gene>
    <name type="primary">yeaC</name>
    <name type="ordered locus">b1777</name>
    <name type="ordered locus">JW1766</name>
</gene>
<feature type="chain" id="PRO_0000169010" description="Uncharacterized protein YeaC">
    <location>
        <begin position="1"/>
        <end position="90"/>
    </location>
</feature>
<name>YEAC_ECOLI</name>
<sequence length="90" mass="10338">MNLDDIINSMMPEVYQRLSTAVELGKWPDGVALTEEQKENCLQLVMLWQARHNIEAQHMTIDTNGQMVMKSKQQLKEDFGISAKPIAMFK</sequence>
<keyword id="KW-1185">Reference proteome</keyword>
<protein>
    <recommendedName>
        <fullName>Uncharacterized protein YeaC</fullName>
    </recommendedName>
</protein>
<organism>
    <name type="scientific">Escherichia coli (strain K12)</name>
    <dbReference type="NCBI Taxonomy" id="83333"/>
    <lineage>
        <taxon>Bacteria</taxon>
        <taxon>Pseudomonadati</taxon>
        <taxon>Pseudomonadota</taxon>
        <taxon>Gammaproteobacteria</taxon>
        <taxon>Enterobacterales</taxon>
        <taxon>Enterobacteriaceae</taxon>
        <taxon>Escherichia</taxon>
    </lineage>
</organism>
<reference key="1">
    <citation type="journal article" date="1997" name="Science">
        <title>The complete genome sequence of Escherichia coli K-12.</title>
        <authorList>
            <person name="Blattner F.R."/>
            <person name="Plunkett G. III"/>
            <person name="Bloch C.A."/>
            <person name="Perna N.T."/>
            <person name="Burland V."/>
            <person name="Riley M."/>
            <person name="Collado-Vides J."/>
            <person name="Glasner J.D."/>
            <person name="Rode C.K."/>
            <person name="Mayhew G.F."/>
            <person name="Gregor J."/>
            <person name="Davis N.W."/>
            <person name="Kirkpatrick H.A."/>
            <person name="Goeden M.A."/>
            <person name="Rose D.J."/>
            <person name="Mau B."/>
            <person name="Shao Y."/>
        </authorList>
    </citation>
    <scope>NUCLEOTIDE SEQUENCE [LARGE SCALE GENOMIC DNA]</scope>
    <source>
        <strain>K12 / MG1655 / ATCC 47076</strain>
    </source>
</reference>
<reference key="2">
    <citation type="journal article" date="2006" name="Mol. Syst. Biol.">
        <title>Highly accurate genome sequences of Escherichia coli K-12 strains MG1655 and W3110.</title>
        <authorList>
            <person name="Hayashi K."/>
            <person name="Morooka N."/>
            <person name="Yamamoto Y."/>
            <person name="Fujita K."/>
            <person name="Isono K."/>
            <person name="Choi S."/>
            <person name="Ohtsubo E."/>
            <person name="Baba T."/>
            <person name="Wanner B.L."/>
            <person name="Mori H."/>
            <person name="Horiuchi T."/>
        </authorList>
    </citation>
    <scope>NUCLEOTIDE SEQUENCE [LARGE SCALE GENOMIC DNA]</scope>
    <source>
        <strain>K12 / W3110 / ATCC 27325 / DSM 5911</strain>
    </source>
</reference>
<accession>P76231</accession>
<accession>Q2MB31</accession>